<reference key="1">
    <citation type="journal article" date="2001" name="Clin. Diagn. Lab. Immunol.">
        <title>Identification of the psaA gene, coding for pneumococcal surface adhesin A, in viridans group streptococci other than Streptococcus pneumoniae.</title>
        <authorList>
            <person name="Jado I."/>
            <person name="Fenoll A."/>
            <person name="Casal J."/>
            <person name="Perez A."/>
        </authorList>
    </citation>
    <scope>NUCLEOTIDE SEQUENCE [GENOMIC DNA]</scope>
    <source>
        <strain>ATCC 49456 / DSM 12643 / LMG 14557 / NCTC 12261</strain>
    </source>
</reference>
<name>MTSA_STRMT</name>
<gene>
    <name type="primary">psaA</name>
</gene>
<dbReference type="EMBL" id="AF248236">
    <property type="protein sequence ID" value="AAF64229.1"/>
    <property type="molecule type" value="Genomic_DNA"/>
</dbReference>
<dbReference type="RefSeq" id="WP_000733052.1">
    <property type="nucleotide sequence ID" value="NZ_UHFS01000002.1"/>
</dbReference>
<dbReference type="SMR" id="Q9L5X0"/>
<dbReference type="OrthoDB" id="9793396at2"/>
<dbReference type="GO" id="GO:0005886">
    <property type="term" value="C:plasma membrane"/>
    <property type="evidence" value="ECO:0007669"/>
    <property type="project" value="UniProtKB-SubCell"/>
</dbReference>
<dbReference type="GO" id="GO:0046872">
    <property type="term" value="F:metal ion binding"/>
    <property type="evidence" value="ECO:0007669"/>
    <property type="project" value="UniProtKB-KW"/>
</dbReference>
<dbReference type="GO" id="GO:0007155">
    <property type="term" value="P:cell adhesion"/>
    <property type="evidence" value="ECO:0007669"/>
    <property type="project" value="InterPro"/>
</dbReference>
<dbReference type="GO" id="GO:0030001">
    <property type="term" value="P:metal ion transport"/>
    <property type="evidence" value="ECO:0007669"/>
    <property type="project" value="InterPro"/>
</dbReference>
<dbReference type="CDD" id="cd01137">
    <property type="entry name" value="PsaA"/>
    <property type="match status" value="1"/>
</dbReference>
<dbReference type="Gene3D" id="3.40.50.1980">
    <property type="entry name" value="Nitrogenase molybdenum iron protein domain"/>
    <property type="match status" value="2"/>
</dbReference>
<dbReference type="InterPro" id="IPR006129">
    <property type="entry name" value="AdhesinB"/>
</dbReference>
<dbReference type="InterPro" id="IPR050492">
    <property type="entry name" value="Bact_metal-bind_prot9"/>
</dbReference>
<dbReference type="InterPro" id="IPR006128">
    <property type="entry name" value="Lipoprotein_PsaA-like"/>
</dbReference>
<dbReference type="InterPro" id="IPR006127">
    <property type="entry name" value="ZnuA-like"/>
</dbReference>
<dbReference type="NCBIfam" id="NF040928">
    <property type="entry name" value="ABC_lipo_SloC"/>
    <property type="match status" value="1"/>
</dbReference>
<dbReference type="PANTHER" id="PTHR42953">
    <property type="entry name" value="HIGH-AFFINITY ZINC UPTAKE SYSTEM PROTEIN ZNUA-RELATED"/>
    <property type="match status" value="1"/>
</dbReference>
<dbReference type="PANTHER" id="PTHR42953:SF1">
    <property type="entry name" value="METAL-BINDING PROTEIN HI_0362-RELATED"/>
    <property type="match status" value="1"/>
</dbReference>
<dbReference type="Pfam" id="PF01297">
    <property type="entry name" value="ZnuA"/>
    <property type="match status" value="1"/>
</dbReference>
<dbReference type="PRINTS" id="PR00691">
    <property type="entry name" value="ADHESINB"/>
</dbReference>
<dbReference type="PRINTS" id="PR00690">
    <property type="entry name" value="ADHESNFAMILY"/>
</dbReference>
<dbReference type="SUPFAM" id="SSF53807">
    <property type="entry name" value="Helical backbone' metal receptor"/>
    <property type="match status" value="1"/>
</dbReference>
<dbReference type="PROSITE" id="PS51257">
    <property type="entry name" value="PROKAR_LIPOPROTEIN"/>
    <property type="match status" value="1"/>
</dbReference>
<protein>
    <recommendedName>
        <fullName evidence="3">Manganese ABC transporter substrate-binding lipoprotein PsaA</fullName>
    </recommendedName>
    <alternativeName>
        <fullName>Pneumococcal surface adhesin A</fullName>
    </alternativeName>
</protein>
<feature type="signal peptide" evidence="2">
    <location>
        <begin position="1"/>
        <end position="19"/>
    </location>
</feature>
<feature type="chain" id="PRO_0000031887" description="Manganese ABC transporter substrate-binding lipoprotein PsaA">
    <location>
        <begin position="20"/>
        <end position="309"/>
    </location>
</feature>
<feature type="binding site" evidence="1">
    <location>
        <position position="67"/>
    </location>
    <ligand>
        <name>Mn(2+)</name>
        <dbReference type="ChEBI" id="CHEBI:29035"/>
    </ligand>
</feature>
<feature type="binding site" evidence="1">
    <location>
        <position position="139"/>
    </location>
    <ligand>
        <name>Mn(2+)</name>
        <dbReference type="ChEBI" id="CHEBI:29035"/>
    </ligand>
</feature>
<feature type="binding site" evidence="1">
    <location>
        <position position="205"/>
    </location>
    <ligand>
        <name>Mn(2+)</name>
        <dbReference type="ChEBI" id="CHEBI:29035"/>
    </ligand>
</feature>
<feature type="binding site" evidence="1">
    <location>
        <position position="280"/>
    </location>
    <ligand>
        <name>Mn(2+)</name>
        <dbReference type="ChEBI" id="CHEBI:29035"/>
    </ligand>
</feature>
<feature type="lipid moiety-binding region" description="N-palmitoyl cysteine" evidence="2">
    <location>
        <position position="20"/>
    </location>
</feature>
<feature type="lipid moiety-binding region" description="S-diacylglycerol cysteine" evidence="2">
    <location>
        <position position="20"/>
    </location>
</feature>
<sequence>MKKLGTLFVLFLSVIVLVACASGKKDAASGQKLKVVATNSIIADITKNIAGDKIDLHSIVPIGQDPHEYEPLPEDVKKTSEADLIFYNGINLETGGNAWFSKLVENAKKTENKDYFAVSEGVDVIYLEGKNEKGKEDPHAWLNLENGIIFAKNIAKQLSAKDPNNKEFYEKNLKEYTDKLDKLDKESKDKFNNIPAEKKLIVTSEGAFKYFSKAYGVPSAYIWEINTEEEGTPEQIKTLVEKLRQTKVPSLFVESSVDDRPMKTVSQDTNIPIYAQIFTDSIAEQGKEGDSYYNMMKYNLDKIAEGLAK</sequence>
<accession>Q9L5X0</accession>
<evidence type="ECO:0000250" key="1">
    <source>
        <dbReference type="UniProtKB" id="P0A4G2"/>
    </source>
</evidence>
<evidence type="ECO:0000255" key="2">
    <source>
        <dbReference type="PROSITE-ProRule" id="PRU00303"/>
    </source>
</evidence>
<evidence type="ECO:0000305" key="3"/>
<keyword id="KW-1003">Cell membrane</keyword>
<keyword id="KW-0449">Lipoprotein</keyword>
<keyword id="KW-0464">Manganese</keyword>
<keyword id="KW-0472">Membrane</keyword>
<keyword id="KW-0479">Metal-binding</keyword>
<keyword id="KW-0564">Palmitate</keyword>
<keyword id="KW-0732">Signal</keyword>
<keyword id="KW-0813">Transport</keyword>
<comment type="function">
    <text evidence="1">Part of the ATP-riven (ABC) transport system PsaABC involved in manganese import (By similarity). Binds manganese with high affinity and specificity and delivers it to the membrane permease for translocation into the cytoplasm (By similarity). Also acts as an adhesin which is involved on adherence to extracellular matrix (By similarity).</text>
</comment>
<comment type="subcellular location">
    <subcellularLocation>
        <location evidence="2">Cell membrane</location>
        <topology evidence="2">Lipid-anchor</topology>
    </subcellularLocation>
</comment>
<comment type="similarity">
    <text evidence="3">Belongs to the bacterial solute-binding protein 9 family. Lipoprotein receptor antigen (Lrai) subfamily.</text>
</comment>
<proteinExistence type="inferred from homology"/>
<organism>
    <name type="scientific">Streptococcus mitis</name>
    <dbReference type="NCBI Taxonomy" id="28037"/>
    <lineage>
        <taxon>Bacteria</taxon>
        <taxon>Bacillati</taxon>
        <taxon>Bacillota</taxon>
        <taxon>Bacilli</taxon>
        <taxon>Lactobacillales</taxon>
        <taxon>Streptococcaceae</taxon>
        <taxon>Streptococcus</taxon>
        <taxon>Streptococcus mitis group</taxon>
    </lineage>
</organism>